<feature type="chain" id="PRO_0000245101" description="Ferredoxin-2">
    <location>
        <begin position="1"/>
        <end position="97"/>
    </location>
</feature>
<feature type="domain" description="2Fe-2S ferredoxin-type" evidence="1 3">
    <location>
        <begin position="3"/>
        <end position="93"/>
    </location>
</feature>
<feature type="binding site" evidence="1 3">
    <location>
        <position position="39"/>
    </location>
    <ligand>
        <name>[2Fe-2S] cluster</name>
        <dbReference type="ChEBI" id="CHEBI:190135"/>
    </ligand>
</feature>
<feature type="binding site" evidence="1 3">
    <location>
        <position position="44"/>
    </location>
    <ligand>
        <name>[2Fe-2S] cluster</name>
        <dbReference type="ChEBI" id="CHEBI:190135"/>
    </ligand>
</feature>
<feature type="binding site" evidence="1 3">
    <location>
        <position position="47"/>
    </location>
    <ligand>
        <name>[2Fe-2S] cluster</name>
        <dbReference type="ChEBI" id="CHEBI:190135"/>
    </ligand>
</feature>
<feature type="binding site" evidence="1 3">
    <location>
        <position position="77"/>
    </location>
    <ligand>
        <name>[2Fe-2S] cluster</name>
        <dbReference type="ChEBI" id="CHEBI:190135"/>
    </ligand>
</feature>
<accession>P84874</accession>
<reference evidence="5" key="1">
    <citation type="journal article" date="2005" name="Biol. Pharm. Bull.">
        <title>Amino acid sequences of ferredoxins from Atropa belladonna and Hyoscyamus niger: their similarities to those in other tropane-alkaloid-containing plants.</title>
        <authorList>
            <person name="Mino Y."/>
            <person name="Yukita M."/>
            <person name="Hiratsuka N."/>
            <person name="Wariishi H."/>
        </authorList>
    </citation>
    <scope>PROTEIN SEQUENCE</scope>
    <source>
        <tissue evidence="4">Leaf</tissue>
    </source>
</reference>
<sequence>ATYKVKLVTPDGPVEFDCPDDVYILDQAEEEGHELPYSCRAGSCSSCAGKVKAGTVDQSDGNFLDDDQMADGFVLTCVAYPQSDVTIETHKEEDLTG</sequence>
<proteinExistence type="evidence at protein level"/>
<evidence type="ECO:0000250" key="1">
    <source>
        <dbReference type="UniProtKB" id="P0A3C8"/>
    </source>
</evidence>
<evidence type="ECO:0000255" key="2"/>
<evidence type="ECO:0000255" key="3">
    <source>
        <dbReference type="PROSITE-ProRule" id="PRU00465"/>
    </source>
</evidence>
<evidence type="ECO:0000269" key="4">
    <source>
    </source>
</evidence>
<evidence type="ECO:0000305" key="5"/>
<organism>
    <name type="scientific">Hyoscyamus niger</name>
    <name type="common">Black henbane</name>
    <dbReference type="NCBI Taxonomy" id="4079"/>
    <lineage>
        <taxon>Eukaryota</taxon>
        <taxon>Viridiplantae</taxon>
        <taxon>Streptophyta</taxon>
        <taxon>Embryophyta</taxon>
        <taxon>Tracheophyta</taxon>
        <taxon>Spermatophyta</taxon>
        <taxon>Magnoliopsida</taxon>
        <taxon>eudicotyledons</taxon>
        <taxon>Gunneridae</taxon>
        <taxon>Pentapetalae</taxon>
        <taxon>asterids</taxon>
        <taxon>lamiids</taxon>
        <taxon>Solanales</taxon>
        <taxon>Solanaceae</taxon>
        <taxon>Solanoideae</taxon>
        <taxon>Hyoscyameae</taxon>
        <taxon>Hyoscyamus</taxon>
    </lineage>
</organism>
<comment type="function">
    <text evidence="5">Ferredoxins are iron-sulfur proteins that transfer electrons in a wide variety of metabolic reactions.</text>
</comment>
<comment type="cofactor">
    <cofactor evidence="5">
        <name>[2Fe-2S] cluster</name>
        <dbReference type="ChEBI" id="CHEBI:190135"/>
    </cofactor>
    <text evidence="5">Binds 1 [2Fe-2S] cluster.</text>
</comment>
<comment type="subcellular location">
    <subcellularLocation>
        <location>Plastid</location>
        <location>Chloroplast</location>
    </subcellularLocation>
</comment>
<comment type="similarity">
    <text evidence="2">Belongs to the 2Fe2S plant-type ferredoxin family.</text>
</comment>
<keyword id="KW-0001">2Fe-2S</keyword>
<keyword id="KW-0150">Chloroplast</keyword>
<keyword id="KW-0903">Direct protein sequencing</keyword>
<keyword id="KW-0249">Electron transport</keyword>
<keyword id="KW-0408">Iron</keyword>
<keyword id="KW-0411">Iron-sulfur</keyword>
<keyword id="KW-0479">Metal-binding</keyword>
<keyword id="KW-0934">Plastid</keyword>
<keyword id="KW-0813">Transport</keyword>
<dbReference type="SMR" id="P84874"/>
<dbReference type="GO" id="GO:0009570">
    <property type="term" value="C:chloroplast stroma"/>
    <property type="evidence" value="ECO:0007669"/>
    <property type="project" value="TreeGrafter"/>
</dbReference>
<dbReference type="GO" id="GO:0051537">
    <property type="term" value="F:2 iron, 2 sulfur cluster binding"/>
    <property type="evidence" value="ECO:0007669"/>
    <property type="project" value="UniProtKB-KW"/>
</dbReference>
<dbReference type="GO" id="GO:0009055">
    <property type="term" value="F:electron transfer activity"/>
    <property type="evidence" value="ECO:0007669"/>
    <property type="project" value="InterPro"/>
</dbReference>
<dbReference type="GO" id="GO:0046872">
    <property type="term" value="F:metal ion binding"/>
    <property type="evidence" value="ECO:0007669"/>
    <property type="project" value="UniProtKB-KW"/>
</dbReference>
<dbReference type="GO" id="GO:0022900">
    <property type="term" value="P:electron transport chain"/>
    <property type="evidence" value="ECO:0007669"/>
    <property type="project" value="InterPro"/>
</dbReference>
<dbReference type="GO" id="GO:0006124">
    <property type="term" value="P:ferredoxin metabolic process"/>
    <property type="evidence" value="ECO:0007669"/>
    <property type="project" value="UniProtKB-ARBA"/>
</dbReference>
<dbReference type="CDD" id="cd00207">
    <property type="entry name" value="fer2"/>
    <property type="match status" value="1"/>
</dbReference>
<dbReference type="FunFam" id="3.10.20.30:FF:000014">
    <property type="entry name" value="Ferredoxin"/>
    <property type="match status" value="1"/>
</dbReference>
<dbReference type="Gene3D" id="3.10.20.30">
    <property type="match status" value="1"/>
</dbReference>
<dbReference type="InterPro" id="IPR036010">
    <property type="entry name" value="2Fe-2S_ferredoxin-like_sf"/>
</dbReference>
<dbReference type="InterPro" id="IPR001041">
    <property type="entry name" value="2Fe-2S_ferredoxin-type"/>
</dbReference>
<dbReference type="InterPro" id="IPR006058">
    <property type="entry name" value="2Fe2S_fd_BS"/>
</dbReference>
<dbReference type="InterPro" id="IPR012675">
    <property type="entry name" value="Beta-grasp_dom_sf"/>
</dbReference>
<dbReference type="InterPro" id="IPR010241">
    <property type="entry name" value="Fd_pln"/>
</dbReference>
<dbReference type="NCBIfam" id="TIGR02008">
    <property type="entry name" value="fdx_plant"/>
    <property type="match status" value="1"/>
</dbReference>
<dbReference type="PANTHER" id="PTHR43112">
    <property type="entry name" value="FERREDOXIN"/>
    <property type="match status" value="1"/>
</dbReference>
<dbReference type="PANTHER" id="PTHR43112:SF3">
    <property type="entry name" value="FERREDOXIN-2, CHLOROPLASTIC"/>
    <property type="match status" value="1"/>
</dbReference>
<dbReference type="Pfam" id="PF00111">
    <property type="entry name" value="Fer2"/>
    <property type="match status" value="1"/>
</dbReference>
<dbReference type="SUPFAM" id="SSF54292">
    <property type="entry name" value="2Fe-2S ferredoxin-like"/>
    <property type="match status" value="1"/>
</dbReference>
<dbReference type="PROSITE" id="PS00197">
    <property type="entry name" value="2FE2S_FER_1"/>
    <property type="match status" value="1"/>
</dbReference>
<dbReference type="PROSITE" id="PS51085">
    <property type="entry name" value="2FE2S_FER_2"/>
    <property type="match status" value="1"/>
</dbReference>
<name>FER2_HYONI</name>
<protein>
    <recommendedName>
        <fullName>Ferredoxin-2</fullName>
    </recommendedName>
    <alternativeName>
        <fullName>Minor ferredoxin</fullName>
    </alternativeName>
</protein>